<reference key="1">
    <citation type="journal article" date="2007" name="Genome Res.">
        <title>Genome characteristics of facultatively symbiotic Frankia sp. strains reflect host range and host plant biogeography.</title>
        <authorList>
            <person name="Normand P."/>
            <person name="Lapierre P."/>
            <person name="Tisa L.S."/>
            <person name="Gogarten J.P."/>
            <person name="Alloisio N."/>
            <person name="Bagnarol E."/>
            <person name="Bassi C.A."/>
            <person name="Berry A.M."/>
            <person name="Bickhart D.M."/>
            <person name="Choisne N."/>
            <person name="Couloux A."/>
            <person name="Cournoyer B."/>
            <person name="Cruveiller S."/>
            <person name="Daubin V."/>
            <person name="Demange N."/>
            <person name="Francino M.P."/>
            <person name="Goltsman E."/>
            <person name="Huang Y."/>
            <person name="Kopp O.R."/>
            <person name="Labarre L."/>
            <person name="Lapidus A."/>
            <person name="Lavire C."/>
            <person name="Marechal J."/>
            <person name="Martinez M."/>
            <person name="Mastronunzio J.E."/>
            <person name="Mullin B.C."/>
            <person name="Niemann J."/>
            <person name="Pujic P."/>
            <person name="Rawnsley T."/>
            <person name="Rouy Z."/>
            <person name="Schenowitz C."/>
            <person name="Sellstedt A."/>
            <person name="Tavares F."/>
            <person name="Tomkins J.P."/>
            <person name="Vallenet D."/>
            <person name="Valverde C."/>
            <person name="Wall L.G."/>
            <person name="Wang Y."/>
            <person name="Medigue C."/>
            <person name="Benson D.R."/>
        </authorList>
    </citation>
    <scope>NUCLEOTIDE SEQUENCE [LARGE SCALE GENOMIC DNA]</scope>
    <source>
        <strain>DSM 45818 / CECT 9043 / HFP020203 / CcI3</strain>
    </source>
</reference>
<keyword id="KW-0066">ATP synthesis</keyword>
<keyword id="KW-0067">ATP-binding</keyword>
<keyword id="KW-1003">Cell membrane</keyword>
<keyword id="KW-0139">CF(1)</keyword>
<keyword id="KW-0375">Hydrogen ion transport</keyword>
<keyword id="KW-0406">Ion transport</keyword>
<keyword id="KW-0472">Membrane</keyword>
<keyword id="KW-0547">Nucleotide-binding</keyword>
<keyword id="KW-1185">Reference proteome</keyword>
<keyword id="KW-1278">Translocase</keyword>
<keyword id="KW-0813">Transport</keyword>
<gene>
    <name evidence="1" type="primary">atpA</name>
    <name type="ordered locus">Francci3_3709</name>
</gene>
<feature type="chain" id="PRO_0000238251" description="ATP synthase subunit alpha">
    <location>
        <begin position="1"/>
        <end position="552"/>
    </location>
</feature>
<feature type="region of interest" description="Disordered" evidence="2">
    <location>
        <begin position="516"/>
        <end position="552"/>
    </location>
</feature>
<feature type="binding site" evidence="1">
    <location>
        <begin position="173"/>
        <end position="180"/>
    </location>
    <ligand>
        <name>ATP</name>
        <dbReference type="ChEBI" id="CHEBI:30616"/>
    </ligand>
</feature>
<feature type="site" description="Required for activity" evidence="1">
    <location>
        <position position="374"/>
    </location>
</feature>
<protein>
    <recommendedName>
        <fullName evidence="1">ATP synthase subunit alpha</fullName>
        <ecNumber evidence="1">7.1.2.2</ecNumber>
    </recommendedName>
    <alternativeName>
        <fullName evidence="1">ATP synthase F1 sector subunit alpha</fullName>
    </alternativeName>
    <alternativeName>
        <fullName evidence="1">F-ATPase subunit alpha</fullName>
    </alternativeName>
</protein>
<dbReference type="EC" id="7.1.2.2" evidence="1"/>
<dbReference type="EMBL" id="CP000249">
    <property type="protein sequence ID" value="ABD13061.1"/>
    <property type="molecule type" value="Genomic_DNA"/>
</dbReference>
<dbReference type="RefSeq" id="WP_011438085.1">
    <property type="nucleotide sequence ID" value="NZ_JENI01000016.1"/>
</dbReference>
<dbReference type="SMR" id="Q2J6N1"/>
<dbReference type="STRING" id="106370.Francci3_3709"/>
<dbReference type="KEGG" id="fra:Francci3_3709"/>
<dbReference type="eggNOG" id="COG0056">
    <property type="taxonomic scope" value="Bacteria"/>
</dbReference>
<dbReference type="HOGENOM" id="CLU_010091_2_1_11"/>
<dbReference type="OrthoDB" id="9803053at2"/>
<dbReference type="PhylomeDB" id="Q2J6N1"/>
<dbReference type="Proteomes" id="UP000001937">
    <property type="component" value="Chromosome"/>
</dbReference>
<dbReference type="GO" id="GO:0005886">
    <property type="term" value="C:plasma membrane"/>
    <property type="evidence" value="ECO:0007669"/>
    <property type="project" value="UniProtKB-SubCell"/>
</dbReference>
<dbReference type="GO" id="GO:0045259">
    <property type="term" value="C:proton-transporting ATP synthase complex"/>
    <property type="evidence" value="ECO:0007669"/>
    <property type="project" value="UniProtKB-KW"/>
</dbReference>
<dbReference type="GO" id="GO:0043531">
    <property type="term" value="F:ADP binding"/>
    <property type="evidence" value="ECO:0007669"/>
    <property type="project" value="TreeGrafter"/>
</dbReference>
<dbReference type="GO" id="GO:0005524">
    <property type="term" value="F:ATP binding"/>
    <property type="evidence" value="ECO:0007669"/>
    <property type="project" value="UniProtKB-UniRule"/>
</dbReference>
<dbReference type="GO" id="GO:0046933">
    <property type="term" value="F:proton-transporting ATP synthase activity, rotational mechanism"/>
    <property type="evidence" value="ECO:0007669"/>
    <property type="project" value="UniProtKB-UniRule"/>
</dbReference>
<dbReference type="CDD" id="cd18113">
    <property type="entry name" value="ATP-synt_F1_alpha_C"/>
    <property type="match status" value="1"/>
</dbReference>
<dbReference type="CDD" id="cd18116">
    <property type="entry name" value="ATP-synt_F1_alpha_N"/>
    <property type="match status" value="1"/>
</dbReference>
<dbReference type="CDD" id="cd01132">
    <property type="entry name" value="F1-ATPase_alpha_CD"/>
    <property type="match status" value="1"/>
</dbReference>
<dbReference type="FunFam" id="1.20.150.20:FF:000001">
    <property type="entry name" value="ATP synthase subunit alpha"/>
    <property type="match status" value="1"/>
</dbReference>
<dbReference type="FunFam" id="3.40.50.300:FF:000002">
    <property type="entry name" value="ATP synthase subunit alpha"/>
    <property type="match status" value="1"/>
</dbReference>
<dbReference type="Gene3D" id="2.40.30.20">
    <property type="match status" value="1"/>
</dbReference>
<dbReference type="Gene3D" id="1.20.150.20">
    <property type="entry name" value="ATP synthase alpha/beta chain, C-terminal domain"/>
    <property type="match status" value="1"/>
</dbReference>
<dbReference type="Gene3D" id="3.40.50.300">
    <property type="entry name" value="P-loop containing nucleotide triphosphate hydrolases"/>
    <property type="match status" value="1"/>
</dbReference>
<dbReference type="HAMAP" id="MF_01346">
    <property type="entry name" value="ATP_synth_alpha_bact"/>
    <property type="match status" value="1"/>
</dbReference>
<dbReference type="InterPro" id="IPR023366">
    <property type="entry name" value="ATP_synth_asu-like_sf"/>
</dbReference>
<dbReference type="InterPro" id="IPR000793">
    <property type="entry name" value="ATP_synth_asu_C"/>
</dbReference>
<dbReference type="InterPro" id="IPR038376">
    <property type="entry name" value="ATP_synth_asu_C_sf"/>
</dbReference>
<dbReference type="InterPro" id="IPR033732">
    <property type="entry name" value="ATP_synth_F1_a_nt-bd_dom"/>
</dbReference>
<dbReference type="InterPro" id="IPR005294">
    <property type="entry name" value="ATP_synth_F1_asu"/>
</dbReference>
<dbReference type="InterPro" id="IPR020003">
    <property type="entry name" value="ATPase_a/bsu_AS"/>
</dbReference>
<dbReference type="InterPro" id="IPR004100">
    <property type="entry name" value="ATPase_F1/V1/A1_a/bsu_N"/>
</dbReference>
<dbReference type="InterPro" id="IPR036121">
    <property type="entry name" value="ATPase_F1/V1/A1_a/bsu_N_sf"/>
</dbReference>
<dbReference type="InterPro" id="IPR000194">
    <property type="entry name" value="ATPase_F1/V1/A1_a/bsu_nucl-bd"/>
</dbReference>
<dbReference type="InterPro" id="IPR027417">
    <property type="entry name" value="P-loop_NTPase"/>
</dbReference>
<dbReference type="NCBIfam" id="TIGR00962">
    <property type="entry name" value="atpA"/>
    <property type="match status" value="1"/>
</dbReference>
<dbReference type="NCBIfam" id="NF009884">
    <property type="entry name" value="PRK13343.1"/>
    <property type="match status" value="1"/>
</dbReference>
<dbReference type="PANTHER" id="PTHR48082">
    <property type="entry name" value="ATP SYNTHASE SUBUNIT ALPHA, MITOCHONDRIAL"/>
    <property type="match status" value="1"/>
</dbReference>
<dbReference type="PANTHER" id="PTHR48082:SF2">
    <property type="entry name" value="ATP SYNTHASE SUBUNIT ALPHA, MITOCHONDRIAL"/>
    <property type="match status" value="1"/>
</dbReference>
<dbReference type="Pfam" id="PF00006">
    <property type="entry name" value="ATP-synt_ab"/>
    <property type="match status" value="1"/>
</dbReference>
<dbReference type="Pfam" id="PF00306">
    <property type="entry name" value="ATP-synt_ab_C"/>
    <property type="match status" value="1"/>
</dbReference>
<dbReference type="Pfam" id="PF02874">
    <property type="entry name" value="ATP-synt_ab_N"/>
    <property type="match status" value="1"/>
</dbReference>
<dbReference type="SUPFAM" id="SSF47917">
    <property type="entry name" value="C-terminal domain of alpha and beta subunits of F1 ATP synthase"/>
    <property type="match status" value="1"/>
</dbReference>
<dbReference type="SUPFAM" id="SSF50615">
    <property type="entry name" value="N-terminal domain of alpha and beta subunits of F1 ATP synthase"/>
    <property type="match status" value="1"/>
</dbReference>
<dbReference type="SUPFAM" id="SSF52540">
    <property type="entry name" value="P-loop containing nucleoside triphosphate hydrolases"/>
    <property type="match status" value="1"/>
</dbReference>
<dbReference type="PROSITE" id="PS00152">
    <property type="entry name" value="ATPASE_ALPHA_BETA"/>
    <property type="match status" value="1"/>
</dbReference>
<sequence length="552" mass="59691">MTELSIRPEEIRDALREYVDSFQATSAGREEVGRVVVTGDGIARVEGLPHTMTNELLEFHGGVLGLALNLEVGEIGTVILGESENIEEGQEVRRTGQILSAPVGDGFLGRVVDPLGRPIDGLGEIVAEGSRELELQAPTVVQRQPVKEPLQTGIKAIDAMTAIGRGQRQLIIGDRQTGKTTVAIDAIINQRDNWTSGDPSKQVKCVYVAIGQKKSTIREVVNSLEEAGALAYTTIVAAPADEPAGFKYIAPYTGSAIAQHWMYNGQHALIVFDDLTKQAEAYRAISLLLRRPPGREAYPGDVFYLHSRLLERCAKLSDELGGGSLTGLPIIETKANDISAYIPTNVISITDGQVFLESDLFNQGVRPAINVGTSVSRVGGSAQVKAMKSVAGRLRLDLAQYRELEAFSAFGSDLDKASRDQLARGARLVELLKQPQGQPFPVERQVVSIWAGTTGKLDDVPVADIRRFESEFLDFVGRSYPGVYDAIVTTGKLSDDTIAMLESAVAEFKKQFTLSDGKPLVNEPAPSPLDPGLVRQESIPVHRPAARKDDEG</sequence>
<name>ATPA_FRACC</name>
<evidence type="ECO:0000255" key="1">
    <source>
        <dbReference type="HAMAP-Rule" id="MF_01346"/>
    </source>
</evidence>
<evidence type="ECO:0000256" key="2">
    <source>
        <dbReference type="SAM" id="MobiDB-lite"/>
    </source>
</evidence>
<proteinExistence type="inferred from homology"/>
<organism>
    <name type="scientific">Frankia casuarinae (strain DSM 45818 / CECT 9043 / HFP020203 / CcI3)</name>
    <dbReference type="NCBI Taxonomy" id="106370"/>
    <lineage>
        <taxon>Bacteria</taxon>
        <taxon>Bacillati</taxon>
        <taxon>Actinomycetota</taxon>
        <taxon>Actinomycetes</taxon>
        <taxon>Frankiales</taxon>
        <taxon>Frankiaceae</taxon>
        <taxon>Frankia</taxon>
    </lineage>
</organism>
<accession>Q2J6N1</accession>
<comment type="function">
    <text evidence="1">Produces ATP from ADP in the presence of a proton gradient across the membrane. The alpha chain is a regulatory subunit.</text>
</comment>
<comment type="catalytic activity">
    <reaction evidence="1">
        <text>ATP + H2O + 4 H(+)(in) = ADP + phosphate + 5 H(+)(out)</text>
        <dbReference type="Rhea" id="RHEA:57720"/>
        <dbReference type="ChEBI" id="CHEBI:15377"/>
        <dbReference type="ChEBI" id="CHEBI:15378"/>
        <dbReference type="ChEBI" id="CHEBI:30616"/>
        <dbReference type="ChEBI" id="CHEBI:43474"/>
        <dbReference type="ChEBI" id="CHEBI:456216"/>
        <dbReference type="EC" id="7.1.2.2"/>
    </reaction>
</comment>
<comment type="subunit">
    <text evidence="1">F-type ATPases have 2 components, CF(1) - the catalytic core - and CF(0) - the membrane proton channel. CF(1) has five subunits: alpha(3), beta(3), gamma(1), delta(1), epsilon(1). CF(0) has three main subunits: a(1), b(2) and c(9-12). The alpha and beta chains form an alternating ring which encloses part of the gamma chain. CF(1) is attached to CF(0) by a central stalk formed by the gamma and epsilon chains, while a peripheral stalk is formed by the delta and b chains.</text>
</comment>
<comment type="subcellular location">
    <subcellularLocation>
        <location evidence="1">Cell membrane</location>
        <topology evidence="1">Peripheral membrane protein</topology>
    </subcellularLocation>
</comment>
<comment type="similarity">
    <text evidence="1">Belongs to the ATPase alpha/beta chains family.</text>
</comment>